<dbReference type="EC" id="2.1.1.33" evidence="2"/>
<dbReference type="EMBL" id="BA000033">
    <property type="protein sequence ID" value="BAB95556.1"/>
    <property type="molecule type" value="Genomic_DNA"/>
</dbReference>
<dbReference type="RefSeq" id="WP_001266160.1">
    <property type="nucleotide sequence ID" value="NC_003923.1"/>
</dbReference>
<dbReference type="SMR" id="Q8NW26"/>
<dbReference type="KEGG" id="sam:MW1691"/>
<dbReference type="HOGENOM" id="CLU_050910_2_1_9"/>
<dbReference type="UniPathway" id="UPA00989"/>
<dbReference type="GO" id="GO:0043527">
    <property type="term" value="C:tRNA methyltransferase complex"/>
    <property type="evidence" value="ECO:0007669"/>
    <property type="project" value="TreeGrafter"/>
</dbReference>
<dbReference type="GO" id="GO:0008176">
    <property type="term" value="F:tRNA (guanine(46)-N7)-methyltransferase activity"/>
    <property type="evidence" value="ECO:0007669"/>
    <property type="project" value="UniProtKB-UniRule"/>
</dbReference>
<dbReference type="FunFam" id="3.40.50.150:FF:000035">
    <property type="entry name" value="tRNA (guanine-N(7)-)-methyltransferase"/>
    <property type="match status" value="1"/>
</dbReference>
<dbReference type="Gene3D" id="3.40.50.150">
    <property type="entry name" value="Vaccinia Virus protein VP39"/>
    <property type="match status" value="1"/>
</dbReference>
<dbReference type="HAMAP" id="MF_01057">
    <property type="entry name" value="tRNA_methyltr_TrmB"/>
    <property type="match status" value="1"/>
</dbReference>
<dbReference type="InterPro" id="IPR029063">
    <property type="entry name" value="SAM-dependent_MTases_sf"/>
</dbReference>
<dbReference type="InterPro" id="IPR003358">
    <property type="entry name" value="tRNA_(Gua-N-7)_MeTrfase_Trmb"/>
</dbReference>
<dbReference type="InterPro" id="IPR055361">
    <property type="entry name" value="tRNA_methyltr_TrmB_bact"/>
</dbReference>
<dbReference type="NCBIfam" id="NF001080">
    <property type="entry name" value="PRK00121.2-2"/>
    <property type="match status" value="1"/>
</dbReference>
<dbReference type="NCBIfam" id="TIGR00091">
    <property type="entry name" value="tRNA (guanosine(46)-N7)-methyltransferase TrmB"/>
    <property type="match status" value="1"/>
</dbReference>
<dbReference type="PANTHER" id="PTHR23417">
    <property type="entry name" value="3-DEOXY-D-MANNO-OCTULOSONIC-ACID TRANSFERASE/TRNA GUANINE-N 7 - -METHYLTRANSFERASE"/>
    <property type="match status" value="1"/>
</dbReference>
<dbReference type="PANTHER" id="PTHR23417:SF14">
    <property type="entry name" value="PENTACOTRIPEPTIDE-REPEAT REGION OF PRORP DOMAIN-CONTAINING PROTEIN"/>
    <property type="match status" value="1"/>
</dbReference>
<dbReference type="Pfam" id="PF02390">
    <property type="entry name" value="Methyltransf_4"/>
    <property type="match status" value="1"/>
</dbReference>
<dbReference type="SUPFAM" id="SSF53335">
    <property type="entry name" value="S-adenosyl-L-methionine-dependent methyltransferases"/>
    <property type="match status" value="1"/>
</dbReference>
<dbReference type="PROSITE" id="PS51625">
    <property type="entry name" value="SAM_MT_TRMB"/>
    <property type="match status" value="1"/>
</dbReference>
<accession>Q8NW26</accession>
<organism>
    <name type="scientific">Staphylococcus aureus (strain MW2)</name>
    <dbReference type="NCBI Taxonomy" id="196620"/>
    <lineage>
        <taxon>Bacteria</taxon>
        <taxon>Bacillati</taxon>
        <taxon>Bacillota</taxon>
        <taxon>Bacilli</taxon>
        <taxon>Bacillales</taxon>
        <taxon>Staphylococcaceae</taxon>
        <taxon>Staphylococcus</taxon>
    </lineage>
</organism>
<comment type="function">
    <text evidence="2">Catalyzes the formation of N(7)-methylguanine at position 46 (m7G46) in tRNA.</text>
</comment>
<comment type="catalytic activity">
    <reaction evidence="2">
        <text>guanosine(46) in tRNA + S-adenosyl-L-methionine = N(7)-methylguanosine(46) in tRNA + S-adenosyl-L-homocysteine</text>
        <dbReference type="Rhea" id="RHEA:42708"/>
        <dbReference type="Rhea" id="RHEA-COMP:10188"/>
        <dbReference type="Rhea" id="RHEA-COMP:10189"/>
        <dbReference type="ChEBI" id="CHEBI:57856"/>
        <dbReference type="ChEBI" id="CHEBI:59789"/>
        <dbReference type="ChEBI" id="CHEBI:74269"/>
        <dbReference type="ChEBI" id="CHEBI:74480"/>
        <dbReference type="EC" id="2.1.1.33"/>
    </reaction>
</comment>
<comment type="pathway">
    <text evidence="2">tRNA modification; N(7)-methylguanine-tRNA biosynthesis.</text>
</comment>
<comment type="similarity">
    <text evidence="2">Belongs to the class I-like SAM-binding methyltransferase superfamily. TrmB family.</text>
</comment>
<protein>
    <recommendedName>
        <fullName evidence="2">tRNA (guanine-N(7)-)-methyltransferase</fullName>
        <ecNumber evidence="2">2.1.1.33</ecNumber>
    </recommendedName>
    <alternativeName>
        <fullName evidence="2">tRNA (guanine(46)-N(7))-methyltransferase</fullName>
    </alternativeName>
    <alternativeName>
        <fullName evidence="2">tRNA(m7G46)-methyltransferase</fullName>
    </alternativeName>
</protein>
<reference key="1">
    <citation type="journal article" date="2002" name="Lancet">
        <title>Genome and virulence determinants of high virulence community-acquired MRSA.</title>
        <authorList>
            <person name="Baba T."/>
            <person name="Takeuchi F."/>
            <person name="Kuroda M."/>
            <person name="Yuzawa H."/>
            <person name="Aoki K."/>
            <person name="Oguchi A."/>
            <person name="Nagai Y."/>
            <person name="Iwama N."/>
            <person name="Asano K."/>
            <person name="Naimi T."/>
            <person name="Kuroda H."/>
            <person name="Cui L."/>
            <person name="Yamamoto K."/>
            <person name="Hiramatsu K."/>
        </authorList>
    </citation>
    <scope>NUCLEOTIDE SEQUENCE [LARGE SCALE GENOMIC DNA]</scope>
    <source>
        <strain>MW2</strain>
    </source>
</reference>
<evidence type="ECO:0000250" key="1"/>
<evidence type="ECO:0000255" key="2">
    <source>
        <dbReference type="HAMAP-Rule" id="MF_01057"/>
    </source>
</evidence>
<name>TRMB_STAAW</name>
<proteinExistence type="inferred from homology"/>
<feature type="chain" id="PRO_0000171393" description="tRNA (guanine-N(7)-)-methyltransferase">
    <location>
        <begin position="1"/>
        <end position="214"/>
    </location>
</feature>
<feature type="active site" evidence="1">
    <location>
        <position position="117"/>
    </location>
</feature>
<feature type="binding site" evidence="2">
    <location>
        <position position="43"/>
    </location>
    <ligand>
        <name>S-adenosyl-L-methionine</name>
        <dbReference type="ChEBI" id="CHEBI:59789"/>
    </ligand>
</feature>
<feature type="binding site" evidence="2">
    <location>
        <position position="68"/>
    </location>
    <ligand>
        <name>S-adenosyl-L-methionine</name>
        <dbReference type="ChEBI" id="CHEBI:59789"/>
    </ligand>
</feature>
<feature type="binding site" evidence="2">
    <location>
        <position position="95"/>
    </location>
    <ligand>
        <name>S-adenosyl-L-methionine</name>
        <dbReference type="ChEBI" id="CHEBI:59789"/>
    </ligand>
</feature>
<feature type="binding site" evidence="2">
    <location>
        <position position="117"/>
    </location>
    <ligand>
        <name>S-adenosyl-L-methionine</name>
        <dbReference type="ChEBI" id="CHEBI:59789"/>
    </ligand>
</feature>
<feature type="binding site" evidence="2">
    <location>
        <position position="121"/>
    </location>
    <ligand>
        <name>substrate</name>
    </ligand>
</feature>
<feature type="binding site" evidence="2">
    <location>
        <position position="153"/>
    </location>
    <ligand>
        <name>substrate</name>
    </ligand>
</feature>
<feature type="binding site" evidence="2">
    <location>
        <begin position="190"/>
        <end position="193"/>
    </location>
    <ligand>
        <name>substrate</name>
    </ligand>
</feature>
<keyword id="KW-0489">Methyltransferase</keyword>
<keyword id="KW-0949">S-adenosyl-L-methionine</keyword>
<keyword id="KW-0808">Transferase</keyword>
<keyword id="KW-0819">tRNA processing</keyword>
<sequence>MRVRYKPWAEDYLKDHPELVDMDGQHAGKMTEWFDKTQPIHIEIGSGMGQFITTLAAQNPHINYISMEREKSIVYKVLDKVKEMSLTNLKIICNDAIELNEYFKDGEVSRIYLNFSDPWPKNRHAKRRLTYHTFLALYQQILNDEGDLHFKTDNRGLFAYSLESMSQFGMYFTKINLNLHQEDDGSNILTEYEKKFSNKGSRIYRMEAKFHSQK</sequence>
<gene>
    <name evidence="2" type="primary">trmB</name>
    <name type="ordered locus">MW1691</name>
</gene>